<reference key="1">
    <citation type="journal article" date="2004" name="Nature">
        <title>Genome sequence of the Brown Norway rat yields insights into mammalian evolution.</title>
        <authorList>
            <person name="Gibbs R.A."/>
            <person name="Weinstock G.M."/>
            <person name="Metzker M.L."/>
            <person name="Muzny D.M."/>
            <person name="Sodergren E.J."/>
            <person name="Scherer S."/>
            <person name="Scott G."/>
            <person name="Steffen D."/>
            <person name="Worley K.C."/>
            <person name="Burch P.E."/>
            <person name="Okwuonu G."/>
            <person name="Hines S."/>
            <person name="Lewis L."/>
            <person name="Deramo C."/>
            <person name="Delgado O."/>
            <person name="Dugan-Rocha S."/>
            <person name="Miner G."/>
            <person name="Morgan M."/>
            <person name="Hawes A."/>
            <person name="Gill R."/>
            <person name="Holt R.A."/>
            <person name="Adams M.D."/>
            <person name="Amanatides P.G."/>
            <person name="Baden-Tillson H."/>
            <person name="Barnstead M."/>
            <person name="Chin S."/>
            <person name="Evans C.A."/>
            <person name="Ferriera S."/>
            <person name="Fosler C."/>
            <person name="Glodek A."/>
            <person name="Gu Z."/>
            <person name="Jennings D."/>
            <person name="Kraft C.L."/>
            <person name="Nguyen T."/>
            <person name="Pfannkoch C.M."/>
            <person name="Sitter C."/>
            <person name="Sutton G.G."/>
            <person name="Venter J.C."/>
            <person name="Woodage T."/>
            <person name="Smith D."/>
            <person name="Lee H.-M."/>
            <person name="Gustafson E."/>
            <person name="Cahill P."/>
            <person name="Kana A."/>
            <person name="Doucette-Stamm L."/>
            <person name="Weinstock K."/>
            <person name="Fechtel K."/>
            <person name="Weiss R.B."/>
            <person name="Dunn D.M."/>
            <person name="Green E.D."/>
            <person name="Blakesley R.W."/>
            <person name="Bouffard G.G."/>
            <person name="De Jong P.J."/>
            <person name="Osoegawa K."/>
            <person name="Zhu B."/>
            <person name="Marra M."/>
            <person name="Schein J."/>
            <person name="Bosdet I."/>
            <person name="Fjell C."/>
            <person name="Jones S."/>
            <person name="Krzywinski M."/>
            <person name="Mathewson C."/>
            <person name="Siddiqui A."/>
            <person name="Wye N."/>
            <person name="McPherson J."/>
            <person name="Zhao S."/>
            <person name="Fraser C.M."/>
            <person name="Shetty J."/>
            <person name="Shatsman S."/>
            <person name="Geer K."/>
            <person name="Chen Y."/>
            <person name="Abramzon S."/>
            <person name="Nierman W.C."/>
            <person name="Havlak P.H."/>
            <person name="Chen R."/>
            <person name="Durbin K.J."/>
            <person name="Egan A."/>
            <person name="Ren Y."/>
            <person name="Song X.-Z."/>
            <person name="Li B."/>
            <person name="Liu Y."/>
            <person name="Qin X."/>
            <person name="Cawley S."/>
            <person name="Cooney A.J."/>
            <person name="D'Souza L.M."/>
            <person name="Martin K."/>
            <person name="Wu J.Q."/>
            <person name="Gonzalez-Garay M.L."/>
            <person name="Jackson A.R."/>
            <person name="Kalafus K.J."/>
            <person name="McLeod M.P."/>
            <person name="Milosavljevic A."/>
            <person name="Virk D."/>
            <person name="Volkov A."/>
            <person name="Wheeler D.A."/>
            <person name="Zhang Z."/>
            <person name="Bailey J.A."/>
            <person name="Eichler E.E."/>
            <person name="Tuzun E."/>
            <person name="Birney E."/>
            <person name="Mongin E."/>
            <person name="Ureta-Vidal A."/>
            <person name="Woodwark C."/>
            <person name="Zdobnov E."/>
            <person name="Bork P."/>
            <person name="Suyama M."/>
            <person name="Torrents D."/>
            <person name="Alexandersson M."/>
            <person name="Trask B.J."/>
            <person name="Young J.M."/>
            <person name="Huang H."/>
            <person name="Wang H."/>
            <person name="Xing H."/>
            <person name="Daniels S."/>
            <person name="Gietzen D."/>
            <person name="Schmidt J."/>
            <person name="Stevens K."/>
            <person name="Vitt U."/>
            <person name="Wingrove J."/>
            <person name="Camara F."/>
            <person name="Mar Alba M."/>
            <person name="Abril J.F."/>
            <person name="Guigo R."/>
            <person name="Smit A."/>
            <person name="Dubchak I."/>
            <person name="Rubin E.M."/>
            <person name="Couronne O."/>
            <person name="Poliakov A."/>
            <person name="Huebner N."/>
            <person name="Ganten D."/>
            <person name="Goesele C."/>
            <person name="Hummel O."/>
            <person name="Kreitler T."/>
            <person name="Lee Y.-A."/>
            <person name="Monti J."/>
            <person name="Schulz H."/>
            <person name="Zimdahl H."/>
            <person name="Himmelbauer H."/>
            <person name="Lehrach H."/>
            <person name="Jacob H.J."/>
            <person name="Bromberg S."/>
            <person name="Gullings-Handley J."/>
            <person name="Jensen-Seaman M.I."/>
            <person name="Kwitek A.E."/>
            <person name="Lazar J."/>
            <person name="Pasko D."/>
            <person name="Tonellato P.J."/>
            <person name="Twigger S."/>
            <person name="Ponting C.P."/>
            <person name="Duarte J.M."/>
            <person name="Rice S."/>
            <person name="Goodstadt L."/>
            <person name="Beatson S.A."/>
            <person name="Emes R.D."/>
            <person name="Winter E.E."/>
            <person name="Webber C."/>
            <person name="Brandt P."/>
            <person name="Nyakatura G."/>
            <person name="Adetobi M."/>
            <person name="Chiaromonte F."/>
            <person name="Elnitski L."/>
            <person name="Eswara P."/>
            <person name="Hardison R.C."/>
            <person name="Hou M."/>
            <person name="Kolbe D."/>
            <person name="Makova K."/>
            <person name="Miller W."/>
            <person name="Nekrutenko A."/>
            <person name="Riemer C."/>
            <person name="Schwartz S."/>
            <person name="Taylor J."/>
            <person name="Yang S."/>
            <person name="Zhang Y."/>
            <person name="Lindpaintner K."/>
            <person name="Andrews T.D."/>
            <person name="Caccamo M."/>
            <person name="Clamp M."/>
            <person name="Clarke L."/>
            <person name="Curwen V."/>
            <person name="Durbin R.M."/>
            <person name="Eyras E."/>
            <person name="Searle S.M."/>
            <person name="Cooper G.M."/>
            <person name="Batzoglou S."/>
            <person name="Brudno M."/>
            <person name="Sidow A."/>
            <person name="Stone E.A."/>
            <person name="Payseur B.A."/>
            <person name="Bourque G."/>
            <person name="Lopez-Otin C."/>
            <person name="Puente X.S."/>
            <person name="Chakrabarti K."/>
            <person name="Chatterji S."/>
            <person name="Dewey C."/>
            <person name="Pachter L."/>
            <person name="Bray N."/>
            <person name="Yap V.B."/>
            <person name="Caspi A."/>
            <person name="Tesler G."/>
            <person name="Pevzner P.A."/>
            <person name="Haussler D."/>
            <person name="Roskin K.M."/>
            <person name="Baertsch R."/>
            <person name="Clawson H."/>
            <person name="Furey T.S."/>
            <person name="Hinrichs A.S."/>
            <person name="Karolchik D."/>
            <person name="Kent W.J."/>
            <person name="Rosenbloom K.R."/>
            <person name="Trumbower H."/>
            <person name="Weirauch M."/>
            <person name="Cooper D.N."/>
            <person name="Stenson P.D."/>
            <person name="Ma B."/>
            <person name="Brent M."/>
            <person name="Arumugam M."/>
            <person name="Shteynberg D."/>
            <person name="Copley R.R."/>
            <person name="Taylor M.S."/>
            <person name="Riethman H."/>
            <person name="Mudunuri U."/>
            <person name="Peterson J."/>
            <person name="Guyer M."/>
            <person name="Felsenfeld A."/>
            <person name="Old S."/>
            <person name="Mockrin S."/>
            <person name="Collins F.S."/>
        </authorList>
    </citation>
    <scope>NUCLEOTIDE SEQUENCE [LARGE SCALE GENOMIC DNA]</scope>
    <source>
        <strain>Brown Norway</strain>
    </source>
</reference>
<reference key="2">
    <citation type="journal article" date="1998" name="DNA Cell Biol.">
        <title>Molecular cloning and characterization of a tumor rejection antigen from rat histiocytoma, AK-5.</title>
        <authorList>
            <person name="Muralikrishna T."/>
            <person name="Begum Z."/>
            <person name="Swamy C.V."/>
            <person name="Khar A."/>
        </authorList>
    </citation>
    <scope>NUCLEOTIDE SEQUENCE [MRNA] OF 425-922</scope>
    <source>
        <strain>Wistar</strain>
    </source>
</reference>
<reference key="3">
    <citation type="journal article" date="2012" name="Nat. Commun.">
        <title>Quantitative maps of protein phosphorylation sites across 14 different rat organs and tissues.</title>
        <authorList>
            <person name="Lundby A."/>
            <person name="Secher A."/>
            <person name="Lage K."/>
            <person name="Nordsborg N.B."/>
            <person name="Dmytriyev A."/>
            <person name="Lundby C."/>
            <person name="Olsen J.V."/>
        </authorList>
    </citation>
    <scope>PHOSPHORYLATION [LARGE SCALE ANALYSIS] AT SER-459; SER-462; THR-874 AND SER-912</scope>
    <scope>IDENTIFICATION BY MASS SPECTROMETRY [LARGE SCALE ANALYSIS]</scope>
</reference>
<keyword id="KW-0009">Actin-binding</keyword>
<keyword id="KW-0963">Cytoplasm</keyword>
<keyword id="KW-0968">Cytoplasmic vesicle</keyword>
<keyword id="KW-0333">Golgi apparatus</keyword>
<keyword id="KW-1017">Isopeptide bond</keyword>
<keyword id="KW-0472">Membrane</keyword>
<keyword id="KW-0597">Phosphoprotein</keyword>
<keyword id="KW-0653">Protein transport</keyword>
<keyword id="KW-1185">Reference proteome</keyword>
<keyword id="KW-0677">Repeat</keyword>
<keyword id="KW-0813">Transport</keyword>
<keyword id="KW-0832">Ubl conjugation</keyword>
<keyword id="KW-0853">WD repeat</keyword>
<organism>
    <name type="scientific">Rattus norvegicus</name>
    <name type="common">Rat</name>
    <dbReference type="NCBI Taxonomy" id="10116"/>
    <lineage>
        <taxon>Eukaryota</taxon>
        <taxon>Metazoa</taxon>
        <taxon>Chordata</taxon>
        <taxon>Craniata</taxon>
        <taxon>Vertebrata</taxon>
        <taxon>Euteleostomi</taxon>
        <taxon>Mammalia</taxon>
        <taxon>Eutheria</taxon>
        <taxon>Euarchontoglires</taxon>
        <taxon>Glires</taxon>
        <taxon>Rodentia</taxon>
        <taxon>Myomorpha</taxon>
        <taxon>Muroidea</taxon>
        <taxon>Muridae</taxon>
        <taxon>Murinae</taxon>
        <taxon>Rattus</taxon>
    </lineage>
</organism>
<dbReference type="EMBL" id="AABR06062859">
    <property type="status" value="NOT_ANNOTATED_CDS"/>
    <property type="molecule type" value="Genomic_DNA"/>
</dbReference>
<dbReference type="EMBL" id="Y15054">
    <property type="protein sequence ID" value="CAA75339.1"/>
    <property type="status" value="ALT_FRAME"/>
    <property type="molecule type" value="mRNA"/>
</dbReference>
<dbReference type="RefSeq" id="NP_001178568.1">
    <property type="nucleotide sequence ID" value="NM_001191639.2"/>
</dbReference>
<dbReference type="RefSeq" id="XP_038941088.1">
    <property type="nucleotide sequence ID" value="XM_039085160.2"/>
</dbReference>
<dbReference type="FunCoup" id="O35828">
    <property type="interactions" value="1719"/>
</dbReference>
<dbReference type="STRING" id="10116.ENSRNOP00000074983"/>
<dbReference type="GlyGen" id="O35828">
    <property type="glycosylation" value="1 site"/>
</dbReference>
<dbReference type="iPTMnet" id="O35828"/>
<dbReference type="PhosphoSitePlus" id="O35828"/>
<dbReference type="jPOST" id="O35828"/>
<dbReference type="PaxDb" id="10116-ENSRNOP00000006067"/>
<dbReference type="Ensembl" id="ENSRNOT00000086305.2">
    <property type="protein sequence ID" value="ENSRNOP00000074983.2"/>
    <property type="gene ID" value="ENSRNOG00000004146.8"/>
</dbReference>
<dbReference type="GeneID" id="192276"/>
<dbReference type="KEGG" id="rno:192276"/>
<dbReference type="UCSC" id="RGD:621591">
    <property type="organism name" value="rat"/>
</dbReference>
<dbReference type="AGR" id="RGD:621591"/>
<dbReference type="CTD" id="79585"/>
<dbReference type="RGD" id="621591">
    <property type="gene designation" value="Coro7"/>
</dbReference>
<dbReference type="eggNOG" id="KOG1445">
    <property type="taxonomic scope" value="Eukaryota"/>
</dbReference>
<dbReference type="GeneTree" id="ENSGT00940000156606"/>
<dbReference type="InParanoid" id="O35828"/>
<dbReference type="OMA" id="TIMYMEV"/>
<dbReference type="TreeFam" id="TF314280"/>
<dbReference type="PRO" id="PR:O35828"/>
<dbReference type="Proteomes" id="UP000002494">
    <property type="component" value="Chromosome 10"/>
</dbReference>
<dbReference type="GO" id="GO:0031410">
    <property type="term" value="C:cytoplasmic vesicle"/>
    <property type="evidence" value="ECO:0007669"/>
    <property type="project" value="UniProtKB-KW"/>
</dbReference>
<dbReference type="GO" id="GO:0005829">
    <property type="term" value="C:cytosol"/>
    <property type="evidence" value="ECO:0007669"/>
    <property type="project" value="UniProtKB-SubCell"/>
</dbReference>
<dbReference type="GO" id="GO:0005794">
    <property type="term" value="C:Golgi apparatus"/>
    <property type="evidence" value="ECO:0000250"/>
    <property type="project" value="UniProtKB"/>
</dbReference>
<dbReference type="GO" id="GO:0000139">
    <property type="term" value="C:Golgi membrane"/>
    <property type="evidence" value="ECO:0007669"/>
    <property type="project" value="UniProtKB-SubCell"/>
</dbReference>
<dbReference type="GO" id="GO:0016020">
    <property type="term" value="C:membrane"/>
    <property type="evidence" value="ECO:0000250"/>
    <property type="project" value="UniProtKB"/>
</dbReference>
<dbReference type="GO" id="GO:0005802">
    <property type="term" value="C:trans-Golgi network"/>
    <property type="evidence" value="ECO:0000250"/>
    <property type="project" value="UniProtKB"/>
</dbReference>
<dbReference type="GO" id="GO:0003779">
    <property type="term" value="F:actin binding"/>
    <property type="evidence" value="ECO:0000250"/>
    <property type="project" value="UniProtKB"/>
</dbReference>
<dbReference type="GO" id="GO:0007015">
    <property type="term" value="P:actin filament organization"/>
    <property type="evidence" value="ECO:0000266"/>
    <property type="project" value="RGD"/>
</dbReference>
<dbReference type="GO" id="GO:0030041">
    <property type="term" value="P:actin filament polymerization"/>
    <property type="evidence" value="ECO:0000250"/>
    <property type="project" value="UniProtKB"/>
</dbReference>
<dbReference type="GO" id="GO:0016477">
    <property type="term" value="P:cell migration"/>
    <property type="evidence" value="ECO:0000266"/>
    <property type="project" value="RGD"/>
</dbReference>
<dbReference type="GO" id="GO:0030010">
    <property type="term" value="P:establishment of cell polarity"/>
    <property type="evidence" value="ECO:0000266"/>
    <property type="project" value="RGD"/>
</dbReference>
<dbReference type="GO" id="GO:0007030">
    <property type="term" value="P:Golgi organization"/>
    <property type="evidence" value="ECO:0000266"/>
    <property type="project" value="RGD"/>
</dbReference>
<dbReference type="GO" id="GO:0006895">
    <property type="term" value="P:Golgi to endosome transport"/>
    <property type="evidence" value="ECO:0000250"/>
    <property type="project" value="UniProtKB"/>
</dbReference>
<dbReference type="GO" id="GO:0035332">
    <property type="term" value="P:positive regulation of hippo signaling"/>
    <property type="evidence" value="ECO:0000266"/>
    <property type="project" value="RGD"/>
</dbReference>
<dbReference type="GO" id="GO:0015031">
    <property type="term" value="P:protein transport"/>
    <property type="evidence" value="ECO:0007669"/>
    <property type="project" value="UniProtKB-KW"/>
</dbReference>
<dbReference type="FunFam" id="2.130.10.10:FF:000076">
    <property type="entry name" value="Coronin"/>
    <property type="match status" value="1"/>
</dbReference>
<dbReference type="FunFam" id="2.130.10.10:FF:000310">
    <property type="entry name" value="Coronin"/>
    <property type="match status" value="1"/>
</dbReference>
<dbReference type="Gene3D" id="2.130.10.10">
    <property type="entry name" value="YVTN repeat-like/Quinoprotein amine dehydrogenase"/>
    <property type="match status" value="2"/>
</dbReference>
<dbReference type="InterPro" id="IPR015505">
    <property type="entry name" value="Coronin"/>
</dbReference>
<dbReference type="InterPro" id="IPR015048">
    <property type="entry name" value="DUF1899"/>
</dbReference>
<dbReference type="InterPro" id="IPR020472">
    <property type="entry name" value="G-protein_beta_WD-40_rep"/>
</dbReference>
<dbReference type="InterPro" id="IPR011047">
    <property type="entry name" value="Quinoprotein_ADH-like_sf"/>
</dbReference>
<dbReference type="InterPro" id="IPR015943">
    <property type="entry name" value="WD40/YVTN_repeat-like_dom_sf"/>
</dbReference>
<dbReference type="InterPro" id="IPR019775">
    <property type="entry name" value="WD40_repeat_CS"/>
</dbReference>
<dbReference type="InterPro" id="IPR001680">
    <property type="entry name" value="WD40_rpt"/>
</dbReference>
<dbReference type="PANTHER" id="PTHR10856">
    <property type="entry name" value="CORONIN"/>
    <property type="match status" value="1"/>
</dbReference>
<dbReference type="PANTHER" id="PTHR10856:SF20">
    <property type="entry name" value="CORONIN-7"/>
    <property type="match status" value="1"/>
</dbReference>
<dbReference type="Pfam" id="PF08953">
    <property type="entry name" value="DUF1899"/>
    <property type="match status" value="2"/>
</dbReference>
<dbReference type="Pfam" id="PF00400">
    <property type="entry name" value="WD40"/>
    <property type="match status" value="4"/>
</dbReference>
<dbReference type="Pfam" id="PF16300">
    <property type="entry name" value="WD40_4"/>
    <property type="match status" value="2"/>
</dbReference>
<dbReference type="PRINTS" id="PR00320">
    <property type="entry name" value="GPROTEINBRPT"/>
</dbReference>
<dbReference type="SMART" id="SM01166">
    <property type="entry name" value="DUF1899"/>
    <property type="match status" value="2"/>
</dbReference>
<dbReference type="SMART" id="SM01167">
    <property type="entry name" value="DUF1900"/>
    <property type="match status" value="2"/>
</dbReference>
<dbReference type="SMART" id="SM00320">
    <property type="entry name" value="WD40"/>
    <property type="match status" value="6"/>
</dbReference>
<dbReference type="SUPFAM" id="SSF50998">
    <property type="entry name" value="Quinoprotein alcohol dehydrogenase-like"/>
    <property type="match status" value="1"/>
</dbReference>
<dbReference type="PROSITE" id="PS00678">
    <property type="entry name" value="WD_REPEATS_1"/>
    <property type="match status" value="1"/>
</dbReference>
<dbReference type="PROSITE" id="PS50082">
    <property type="entry name" value="WD_REPEATS_2"/>
    <property type="match status" value="4"/>
</dbReference>
<dbReference type="PROSITE" id="PS50294">
    <property type="entry name" value="WD_REPEATS_REGION"/>
    <property type="match status" value="2"/>
</dbReference>
<protein>
    <recommendedName>
        <fullName>Coronin-7</fullName>
        <shortName>Crn7</shortName>
    </recommendedName>
    <alternativeName>
        <fullName>70 kDa WD repeat tumor rejection antigen</fullName>
    </alternativeName>
</protein>
<evidence type="ECO:0000250" key="1"/>
<evidence type="ECO:0000250" key="2">
    <source>
        <dbReference type="UniProtKB" id="P57737"/>
    </source>
</evidence>
<evidence type="ECO:0000256" key="3">
    <source>
        <dbReference type="SAM" id="MobiDB-lite"/>
    </source>
</evidence>
<evidence type="ECO:0000305" key="4"/>
<evidence type="ECO:0007744" key="5">
    <source>
    </source>
</evidence>
<comment type="function">
    <text evidence="1">F-actin regulator involved in anterograde Golgi to endosome transport: upon ubiquitination via 'Lys-33'-linked ubiquitin chains by the BCR(KLHL20) E3 ubiquitin ligase complex, interacts with EPS15 and localizes to the trans-Golgi network, where it promotes actin polymerization, thereby facilitating post-Golgi trafficking. May play a role in the maintenance of the Golgi apparatus morphology (By similarity).</text>
</comment>
<comment type="subunit">
    <text evidence="1">Interacts with clathrin adapter AP1 complex. This interaction takes place at Golgi membranes and not AP1-positive endosomal membranes. Interacts (when ubiquitinated at Lys-469) with EPS15 (By similarity).</text>
</comment>
<comment type="subcellular location">
    <subcellularLocation>
        <location evidence="1">Golgi apparatus membrane</location>
    </subcellularLocation>
    <subcellularLocation>
        <location evidence="1">Golgi apparatus</location>
        <location evidence="1">trans-Golgi network</location>
    </subcellularLocation>
    <subcellularLocation>
        <location evidence="1">Cytoplasmic vesicle</location>
    </subcellularLocation>
    <subcellularLocation>
        <location evidence="1">Cytoplasm</location>
        <location evidence="1">Cytosol</location>
    </subcellularLocation>
    <text evidence="1">Predominantly cytosolic. Detected on vesicle-like cytoplasmic structures and on the cis-Golgi. Not associated with actin filaments (By similarity).</text>
</comment>
<comment type="PTM">
    <text evidence="1">The membrane-associated form is phosphorylated on tyrosine residues.</text>
</comment>
<comment type="PTM">
    <text evidence="1">Ubiquitinated via 'Lys-33'-linked ubiquitin chains by the BCR(KLHL20) E3 ubiquitin ligase complex: 'Lys-33'-linked ubiquitination promotes interaction with EPS15 and facilitates actin polymerization at the trans-Golgi network, thereby facilitating post-Golgi trafficking. Deubiquitinated by ZRANB1/TRABID (By similarity).</text>
</comment>
<comment type="similarity">
    <text evidence="4">Belongs to the WD repeat coronin family.</text>
</comment>
<comment type="sequence caution" evidence="4">
    <conflict type="frameshift">
        <sequence resource="EMBL-CDS" id="CAA75339"/>
    </conflict>
</comment>
<proteinExistence type="evidence at protein level"/>
<name>CORO7_RAT</name>
<feature type="chain" id="PRO_0000050936" description="Coronin-7">
    <location>
        <begin position="1"/>
        <end position="922"/>
    </location>
</feature>
<feature type="repeat" description="WD 1">
    <location>
        <begin position="75"/>
        <end position="115"/>
    </location>
</feature>
<feature type="repeat" description="WD 2">
    <location>
        <begin position="124"/>
        <end position="163"/>
    </location>
</feature>
<feature type="repeat" description="WD 3">
    <location>
        <begin position="166"/>
        <end position="205"/>
    </location>
</feature>
<feature type="repeat" description="WD 4">
    <location>
        <begin position="209"/>
        <end position="253"/>
    </location>
</feature>
<feature type="repeat" description="WD 5">
    <location>
        <begin position="539"/>
        <end position="579"/>
    </location>
</feature>
<feature type="repeat" description="WD 6">
    <location>
        <begin position="589"/>
        <end position="629"/>
    </location>
</feature>
<feature type="repeat" description="WD 7">
    <location>
        <begin position="632"/>
        <end position="671"/>
    </location>
</feature>
<feature type="repeat" description="WD 8">
    <location>
        <begin position="725"/>
        <end position="765"/>
    </location>
</feature>
<feature type="region of interest" description="Disordered" evidence="3">
    <location>
        <begin position="386"/>
        <end position="462"/>
    </location>
</feature>
<feature type="region of interest" description="Disordered" evidence="3">
    <location>
        <begin position="854"/>
        <end position="922"/>
    </location>
</feature>
<feature type="compositionally biased region" description="Low complexity" evidence="3">
    <location>
        <begin position="423"/>
        <end position="456"/>
    </location>
</feature>
<feature type="compositionally biased region" description="Basic and acidic residues" evidence="3">
    <location>
        <begin position="881"/>
        <end position="893"/>
    </location>
</feature>
<feature type="modified residue" description="Phosphoserine" evidence="5">
    <location>
        <position position="459"/>
    </location>
</feature>
<feature type="modified residue" description="Phosphoserine" evidence="5">
    <location>
        <position position="462"/>
    </location>
</feature>
<feature type="modified residue" description="Phosphothreonine" evidence="5">
    <location>
        <position position="874"/>
    </location>
</feature>
<feature type="modified residue" description="Phosphoserine" evidence="5">
    <location>
        <position position="912"/>
    </location>
</feature>
<feature type="cross-link" description="Glycyl lysine isopeptide (Lys-Gly) (interchain with G-Cter in ubiquitin)" evidence="2">
    <location>
        <position position="469"/>
    </location>
</feature>
<feature type="sequence conflict" description="In Ref. 2; CAA75339." evidence="4" ref="2">
    <original>A</original>
    <variation>G</variation>
    <location>
        <position position="534"/>
    </location>
</feature>
<feature type="sequence conflict" description="In Ref. 2; CAA75339." evidence="4" ref="2">
    <original>V</original>
    <variation>I</variation>
    <location>
        <position position="579"/>
    </location>
</feature>
<feature type="sequence conflict" description="In Ref. 2; CAA75339." evidence="4" ref="2">
    <original>G</original>
    <variation>R</variation>
    <location>
        <position position="624"/>
    </location>
</feature>
<feature type="sequence conflict" description="In Ref. 2; CAA75339." evidence="4" ref="2">
    <location>
        <position position="819"/>
    </location>
</feature>
<sequence length="922" mass="100782">MNRFKASKFRHMEARPSRREAWISDIRAGTTATCGNHIKSSCSLIAFNSDRPGVLGIISLEGHEENKRHVTYLGCHSDLVTDLDFSPFDDFLLASGSADRTIKLWRLSSTGEALPSVPGVVLGPEELPVDVLQFHPTADGVLVSTAGRTVKVWDVAKQQHLTELEAHKDLVQSAVWSRDGATVGTACKDKQLRIFDPRARAQASQSTQAHENNRDIRLAWTGIQEYLVSTGFNQMREREAKLWDTRVFSSALASITLDTSPGSLIPLLDPDSGLLVLAGKGENQLYCYEVTPQQPALSPVTQCILENALRGAALVPRQALAVMNCEVLQVLQLSDTAIIPISHRVPRKAVEFHEDLFPDTAGSVPASDAHTWWAGDNQQVQKVSLNPAHRPHPRFTSSLLPTLEPSPNMEQPAELPRADTELSEGFSSPSSLVSPSTPSSLGLSLSSTSGIGTSPSQRSLQSLLGPSSKFRHAEGTILHRDSHITNLKGLNLTTPGESDGFCANRLRVAVPLLSSGGQVAVLELQKPGRLPDTALPTLQNGAAVMDLVWDPFDPHRLAVAGEDARIRLWRVPPGGLKNVLTTPETVLTGHTEKIYSLRFHPLAADVLASSSYDLTIRIWDLQAGTEQLRLQGHQDQIFSLAWSPDGKQLATVCKDGRVRVYDPRSSPLPLQDGPGPEGGRGARIVWVCNGGCLLVSGFDSRSERQLQLYMADALAEGPSALLGLDVAPSTLLPSYDPDTGLVLLTGKGDTRVFLYEVIPEAPFFLECNSFTSPDPHKGFILLPKTECDIQDVEFARCLRLRQTSLEPVAFRLPRVRKEFFQDDVFPDTAVTWASALDAKAWFKGANGQPRLLSLQPPGMTPVSQAPREVPARRTPSSAQYLEEKSDQQKKEELLNAMVAKLGNREDPLPQDSFEGVDEDEWD</sequence>
<gene>
    <name type="primary">Coro7</name>
</gene>
<accession>O35828</accession>
<accession>D3ZUE2</accession>